<keyword id="KW-1015">Disulfide bond</keyword>
<keyword id="KW-0325">Glycoprotein</keyword>
<keyword id="KW-0372">Hormone</keyword>
<keyword id="KW-1185">Reference proteome</keyword>
<keyword id="KW-0964">Secreted</keyword>
<keyword id="KW-0732">Signal</keyword>
<comment type="function">
    <text evidence="2">Shared alpha chain of the active heterodimeric glycoprotein hormones thyrotropin/thyroid stimulating hormone/TSH, lutropin/luteinizing hormone/LH and follitropin/follicle stimulating hormone/FSH. These hormones bind specific receptors on target cells that in turn activate downstream signaling pathways.</text>
</comment>
<comment type="subunit">
    <text evidence="2">Heterodimer. The active hormones thyrotropin, lutropin and follitropin are heterodimers composed of CGA, a common alpha chain described here and a unique beta chain which confers their biological specificity to the hormones: TSHB for thyrotropin, LHB for lutropin and FSHB for follitropin.</text>
</comment>
<comment type="subcellular location">
    <subcellularLocation>
        <location evidence="2">Secreted</location>
    </subcellularLocation>
</comment>
<comment type="similarity">
    <text evidence="3">Belongs to the glycoprotein hormones subunit alpha family.</text>
</comment>
<organism>
    <name type="scientific">Ailuropoda melanoleuca</name>
    <name type="common">Giant panda</name>
    <dbReference type="NCBI Taxonomy" id="9646"/>
    <lineage>
        <taxon>Eukaryota</taxon>
        <taxon>Metazoa</taxon>
        <taxon>Chordata</taxon>
        <taxon>Craniata</taxon>
        <taxon>Vertebrata</taxon>
        <taxon>Euteleostomi</taxon>
        <taxon>Mammalia</taxon>
        <taxon>Eutheria</taxon>
        <taxon>Laurasiatheria</taxon>
        <taxon>Carnivora</taxon>
        <taxon>Caniformia</taxon>
        <taxon>Ursidae</taxon>
        <taxon>Ailuropoda</taxon>
    </lineage>
</organism>
<sequence length="120" mass="13573">MDYYRKYAAVILTTLSVFLHILHSFPDGEFTMQGCPECKLKENKYFSKLGAPIYQCMGCCFSRAYPTPARSKKTMLVPKNITLEATCCVAKAFTKATVMGNTKVENHTDCHCSTCYYHKS</sequence>
<dbReference type="EMBL" id="AF448453">
    <property type="protein sequence ID" value="AAL41020.1"/>
    <property type="molecule type" value="mRNA"/>
</dbReference>
<dbReference type="RefSeq" id="NP_001291847.1">
    <property type="nucleotide sequence ID" value="NM_001304918.1"/>
</dbReference>
<dbReference type="SMR" id="Q8WN20"/>
<dbReference type="FunCoup" id="Q8WN20">
    <property type="interactions" value="38"/>
</dbReference>
<dbReference type="STRING" id="9646.ENSAMEP00000012113"/>
<dbReference type="GlyCosmos" id="Q8WN20">
    <property type="glycosylation" value="2 sites, No reported glycans"/>
</dbReference>
<dbReference type="GeneID" id="100480190"/>
<dbReference type="KEGG" id="aml:100480190"/>
<dbReference type="CTD" id="1081"/>
<dbReference type="eggNOG" id="ENOG502S1PK">
    <property type="taxonomic scope" value="Eukaryota"/>
</dbReference>
<dbReference type="InParanoid" id="Q8WN20"/>
<dbReference type="OrthoDB" id="9852859at2759"/>
<dbReference type="Proteomes" id="UP000008912">
    <property type="component" value="Unassembled WGS sequence"/>
</dbReference>
<dbReference type="GO" id="GO:0005615">
    <property type="term" value="C:extracellular space"/>
    <property type="evidence" value="ECO:0000250"/>
    <property type="project" value="UniProtKB"/>
</dbReference>
<dbReference type="GO" id="GO:0016914">
    <property type="term" value="C:follicle-stimulating hormone complex"/>
    <property type="evidence" value="ECO:0000250"/>
    <property type="project" value="UniProtKB"/>
</dbReference>
<dbReference type="GO" id="GO:0016913">
    <property type="term" value="F:follicle-stimulating hormone activity"/>
    <property type="evidence" value="ECO:0000250"/>
    <property type="project" value="UniProtKB"/>
</dbReference>
<dbReference type="GO" id="GO:0007186">
    <property type="term" value="P:G protein-coupled receptor signaling pathway"/>
    <property type="evidence" value="ECO:0000250"/>
    <property type="project" value="UniProtKB"/>
</dbReference>
<dbReference type="GO" id="GO:0010893">
    <property type="term" value="P:positive regulation of steroid biosynthetic process"/>
    <property type="evidence" value="ECO:0000250"/>
    <property type="project" value="UniProtKB"/>
</dbReference>
<dbReference type="GO" id="GO:0010469">
    <property type="term" value="P:regulation of signaling receptor activity"/>
    <property type="evidence" value="ECO:0000250"/>
    <property type="project" value="UniProtKB"/>
</dbReference>
<dbReference type="GO" id="GO:0006590">
    <property type="term" value="P:thyroid hormone generation"/>
    <property type="evidence" value="ECO:0007669"/>
    <property type="project" value="TreeGrafter"/>
</dbReference>
<dbReference type="FunFam" id="2.10.90.10:FF:000011">
    <property type="entry name" value="Glycoprotein hormones alpha chain"/>
    <property type="match status" value="1"/>
</dbReference>
<dbReference type="Gene3D" id="2.10.90.10">
    <property type="entry name" value="Cystine-knot cytokines"/>
    <property type="match status" value="1"/>
</dbReference>
<dbReference type="InterPro" id="IPR029034">
    <property type="entry name" value="Cystine-knot_cytokine"/>
</dbReference>
<dbReference type="InterPro" id="IPR000476">
    <property type="entry name" value="Glyco_hormone"/>
</dbReference>
<dbReference type="PANTHER" id="PTHR11509">
    <property type="entry name" value="GLYCOPROTEIN HORMONE ALPHA CHAIN"/>
    <property type="match status" value="1"/>
</dbReference>
<dbReference type="PANTHER" id="PTHR11509:SF0">
    <property type="entry name" value="GLYCOPROTEIN HORMONES ALPHA CHAIN"/>
    <property type="match status" value="1"/>
</dbReference>
<dbReference type="Pfam" id="PF00236">
    <property type="entry name" value="Hormone_6"/>
    <property type="match status" value="1"/>
</dbReference>
<dbReference type="PRINTS" id="PR00274">
    <property type="entry name" value="GLYCOHORMONE"/>
</dbReference>
<dbReference type="SMART" id="SM00067">
    <property type="entry name" value="GHA"/>
    <property type="match status" value="1"/>
</dbReference>
<dbReference type="SUPFAM" id="SSF57501">
    <property type="entry name" value="Cystine-knot cytokines"/>
    <property type="match status" value="1"/>
</dbReference>
<dbReference type="PROSITE" id="PS00779">
    <property type="entry name" value="GLYCO_HORMONE_ALPHA_1"/>
    <property type="match status" value="1"/>
</dbReference>
<dbReference type="PROSITE" id="PS00780">
    <property type="entry name" value="GLYCO_HORMONE_ALPHA_2"/>
    <property type="match status" value="1"/>
</dbReference>
<dbReference type="PROSITE" id="PS50277">
    <property type="entry name" value="GLYCO_HORMONE_ALPHA_3"/>
    <property type="match status" value="1"/>
</dbReference>
<name>GLHA_AILME</name>
<feature type="signal peptide" evidence="1">
    <location>
        <begin position="1"/>
        <end position="24"/>
    </location>
</feature>
<feature type="chain" id="PRO_0000042872" description="Glycoprotein hormones alpha chain">
    <location>
        <begin position="25"/>
        <end position="120"/>
    </location>
</feature>
<feature type="glycosylation site" description="N-linked (GlcNAc...) asparagine" evidence="2">
    <location>
        <position position="80"/>
    </location>
</feature>
<feature type="glycosylation site" description="N-linked (GlcNAc...) asparagine" evidence="2">
    <location>
        <position position="106"/>
    </location>
</feature>
<feature type="disulfide bond" evidence="2">
    <location>
        <begin position="35"/>
        <end position="59"/>
    </location>
</feature>
<feature type="disulfide bond" evidence="2">
    <location>
        <begin position="38"/>
        <end position="88"/>
    </location>
</feature>
<feature type="disulfide bond" evidence="2">
    <location>
        <begin position="56"/>
        <end position="110"/>
    </location>
</feature>
<feature type="disulfide bond" evidence="2">
    <location>
        <begin position="60"/>
        <end position="112"/>
    </location>
</feature>
<feature type="disulfide bond" evidence="2">
    <location>
        <begin position="87"/>
        <end position="115"/>
    </location>
</feature>
<accession>Q8WN20</accession>
<protein>
    <recommendedName>
        <fullName>Glycoprotein hormones alpha chain</fullName>
    </recommendedName>
    <alternativeName>
        <fullName>Anterior pituitary glycoprotein hormones common subunit alpha</fullName>
    </alternativeName>
    <alternativeName>
        <fullName>Follicle-stimulating hormone alpha chain</fullName>
        <shortName>FSH-alpha</shortName>
    </alternativeName>
    <alternativeName>
        <fullName>Follitropin alpha chain</fullName>
    </alternativeName>
    <alternativeName>
        <fullName>Luteinizing hormone alpha chain</fullName>
        <shortName>LSH-alpha</shortName>
    </alternativeName>
    <alternativeName>
        <fullName>Lutropin alpha chain</fullName>
    </alternativeName>
    <alternativeName>
        <fullName>Thyroid-stimulating hormone alpha chain</fullName>
        <shortName>TSH-alpha</shortName>
    </alternativeName>
    <alternativeName>
        <fullName>Thyrotropin alpha chain</fullName>
    </alternativeName>
</protein>
<proteinExistence type="evidence at transcript level"/>
<reference key="1">
    <citation type="journal article" date="2003" name="Anim. Reprod. Sci.">
        <title>Cloning and sequence analysis of FSH and LH in the giant panda (Ailuropoda melanoleuca).</title>
        <authorList>
            <person name="Liao M.J."/>
            <person name="Zhu M.Y."/>
            <person name="Zhang Z.H."/>
            <person name="Zhang A.J."/>
            <person name="Li G.H."/>
            <person name="Sheng F.J."/>
        </authorList>
    </citation>
    <scope>NUCLEOTIDE SEQUENCE [MRNA]</scope>
    <source>
        <tissue>Pituitary</tissue>
    </source>
</reference>
<gene>
    <name type="primary">CGA</name>
</gene>
<evidence type="ECO:0000250" key="1"/>
<evidence type="ECO:0000250" key="2">
    <source>
        <dbReference type="UniProtKB" id="P01215"/>
    </source>
</evidence>
<evidence type="ECO:0000305" key="3"/>